<comment type="function">
    <text evidence="3">Terpene synthase that converts its substrate farnesyl diphosphate (FPP) into the sesquiterpene CAS 137235-51-9 as a major product (PubMed:30254228). Is also able to convert FPP into 9-epi-(E)-caryophyllene, alpha-neoclovene, beta-neoclovene, and 3 yet unidentified sesquiterpenes (PubMed:30254228).</text>
</comment>
<comment type="domain">
    <text evidence="2">Contains several highly conserved motifs that are important for catalytic activity including the aspartate-rich 'DDxx(x)D/E' motif and the 'NDxxSxxxD/E' motif, both of which are involved in complexing metal ions to coordinate the binding of the isoprenyl diphosphate substrate in the active site.</text>
</comment>
<comment type="similarity">
    <text evidence="5">Belongs to the terpene synthase family.</text>
</comment>
<reference key="1">
    <citation type="journal article" date="2018" name="Sci. Rep.">
        <title>Diversity and Functional Evolution of Terpene Synthases in Dictyostelid Social Amoebae.</title>
        <authorList>
            <person name="Chen X."/>
            <person name="Kollner T.G."/>
            <person name="Shaulsky G."/>
            <person name="Jia Q."/>
            <person name="Dickschat J.S."/>
            <person name="Gershenzon J."/>
            <person name="Chen F."/>
        </authorList>
    </citation>
    <scope>NUCLEOTIDE SEQUENCE [MRNA]</scope>
    <scope>FUNCTION</scope>
    <scope>CATALYTIC ACTIVITY</scope>
    <source>
        <strain>AX1</strain>
    </source>
</reference>
<reference key="2">
    <citation type="journal article" date="2011" name="Genome Biol.">
        <title>Comparative genomics of the social amoebae Dictyostelium discoideum and Dictyostelium purpureum.</title>
        <authorList>
            <consortium name="US DOE Joint Genome Institute (JGI-PGF)"/>
            <person name="Sucgang R."/>
            <person name="Kuo A."/>
            <person name="Tian X."/>
            <person name="Salerno W."/>
            <person name="Parikh A."/>
            <person name="Feasley C.L."/>
            <person name="Dalin E."/>
            <person name="Tu H."/>
            <person name="Huang E."/>
            <person name="Barry K."/>
            <person name="Lindquist E."/>
            <person name="Shapiro H."/>
            <person name="Bruce D."/>
            <person name="Schmutz J."/>
            <person name="Salamov A."/>
            <person name="Fey P."/>
            <person name="Gaudet P."/>
            <person name="Anjard C."/>
            <person name="Babu M.M."/>
            <person name="Basu S."/>
            <person name="Bushmanova Y."/>
            <person name="van der Wel H."/>
            <person name="Katoh-Kurasawa M."/>
            <person name="Dinh C."/>
            <person name="Coutinho P.M."/>
            <person name="Saito T."/>
            <person name="Elias M."/>
            <person name="Schaap P."/>
            <person name="Kay R.R."/>
            <person name="Henrissat B."/>
            <person name="Eichinger L."/>
            <person name="Rivero F."/>
            <person name="Putnam N.H."/>
            <person name="West C.M."/>
            <person name="Loomis W.F."/>
            <person name="Chisholm R.L."/>
            <person name="Shaulsky G."/>
            <person name="Strassmann J.E."/>
            <person name="Queller D.C."/>
            <person name="Kuspa A."/>
            <person name="Grigoriev I.V."/>
        </authorList>
    </citation>
    <scope>NUCLEOTIDE SEQUENCE [LARGE SCALE GENOMIC DNA]</scope>
    <source>
        <strain>QSDP1</strain>
    </source>
</reference>
<sequence length="317" mass="37595">MQKEIYYTFDINNIKDKEFTKVFVDCPWEAIRNPTPIDESEHLQWLKDSNLFDCDQDAENFFKDKTYIMSSYINPLNPKDNIIWVIRMHDFIYIVDDFYFEKGLLGEEWVINMFDRDAPQDKIGKTFWNIIEGMEKTGNKKAVEQLLHDTKIWALSVFTYNKCNINSESSFEYYCKYRCLDVGMDFGLSTAKVFAEPLPKEVLESSTYKRIIFGYNQTHSLINDMVSFERERKESNRMANYVMVHAYKTNSVQESMYHCKQMVEGVFNEINVLCEQLKREFPDVSNLDFHLNLIKLVISGDNYVSNDTTYPRYNLNH</sequence>
<dbReference type="EC" id="4.2.3.-" evidence="3"/>
<dbReference type="EMBL" id="MG262464">
    <property type="protein sequence ID" value="AXN72972.1"/>
    <property type="molecule type" value="mRNA"/>
</dbReference>
<dbReference type="EMBL" id="GL871111">
    <property type="protein sequence ID" value="EGC34105.1"/>
    <property type="molecule type" value="Genomic_DNA"/>
</dbReference>
<dbReference type="RefSeq" id="XP_003289351.1">
    <property type="nucleotide sequence ID" value="XM_003289303.1"/>
</dbReference>
<dbReference type="SMR" id="F0ZPL2"/>
<dbReference type="STRING" id="5786.F0ZPL2"/>
<dbReference type="EnsemblProtists" id="EGC34105">
    <property type="protein sequence ID" value="EGC34105"/>
    <property type="gene ID" value="DICPUDRAFT_153721"/>
</dbReference>
<dbReference type="GeneID" id="10502313"/>
<dbReference type="KEGG" id="dpp:DICPUDRAFT_153721"/>
<dbReference type="VEuPathDB" id="AmoebaDB:DICPUDRAFT_153721"/>
<dbReference type="InParanoid" id="F0ZPL2"/>
<dbReference type="OMA" id="KCNINSE"/>
<dbReference type="OrthoDB" id="2861623at2759"/>
<dbReference type="Proteomes" id="UP000001064">
    <property type="component" value="Unassembled WGS sequence"/>
</dbReference>
<dbReference type="GO" id="GO:0016829">
    <property type="term" value="F:lyase activity"/>
    <property type="evidence" value="ECO:0007669"/>
    <property type="project" value="UniProtKB-KW"/>
</dbReference>
<dbReference type="GO" id="GO:0046872">
    <property type="term" value="F:metal ion binding"/>
    <property type="evidence" value="ECO:0007669"/>
    <property type="project" value="UniProtKB-KW"/>
</dbReference>
<dbReference type="Gene3D" id="1.10.600.10">
    <property type="entry name" value="Farnesyl Diphosphate Synthase"/>
    <property type="match status" value="1"/>
</dbReference>
<dbReference type="InterPro" id="IPR008949">
    <property type="entry name" value="Isoprenoid_synthase_dom_sf"/>
</dbReference>
<dbReference type="Pfam" id="PF19086">
    <property type="entry name" value="Terpene_syn_C_2"/>
    <property type="match status" value="1"/>
</dbReference>
<dbReference type="SUPFAM" id="SSF48576">
    <property type="entry name" value="Terpenoid synthases"/>
    <property type="match status" value="1"/>
</dbReference>
<gene>
    <name evidence="4" type="primary">TPS3</name>
    <name type="ORF">DICPUDRAFT_153721</name>
</gene>
<name>TPS3_DICPU</name>
<organism>
    <name type="scientific">Dictyostelium purpureum</name>
    <name type="common">Slime mold</name>
    <dbReference type="NCBI Taxonomy" id="5786"/>
    <lineage>
        <taxon>Eukaryota</taxon>
        <taxon>Amoebozoa</taxon>
        <taxon>Evosea</taxon>
        <taxon>Eumycetozoa</taxon>
        <taxon>Dictyostelia</taxon>
        <taxon>Dictyosteliales</taxon>
        <taxon>Dictyosteliaceae</taxon>
        <taxon>Dictyostelium</taxon>
    </lineage>
</organism>
<evidence type="ECO:0000250" key="1">
    <source>
        <dbReference type="UniProtKB" id="Q54BE5"/>
    </source>
</evidence>
<evidence type="ECO:0000250" key="2">
    <source>
        <dbReference type="UniProtKB" id="Q55E23"/>
    </source>
</evidence>
<evidence type="ECO:0000269" key="3">
    <source>
    </source>
</evidence>
<evidence type="ECO:0000303" key="4">
    <source>
    </source>
</evidence>
<evidence type="ECO:0000305" key="5"/>
<keyword id="KW-0456">Lyase</keyword>
<keyword id="KW-0479">Metal-binding</keyword>
<keyword id="KW-1185">Reference proteome</keyword>
<feature type="chain" id="PRO_0000457020" description="Terpene synthase 3">
    <location>
        <begin position="1"/>
        <end position="317"/>
    </location>
</feature>
<feature type="short sequence motif" description="DDxx(x)D/E motif" evidence="1">
    <location>
        <begin position="96"/>
        <end position="101"/>
    </location>
</feature>
<feature type="short sequence motif" description="NDxxSxxxD/E motif" evidence="1">
    <location>
        <begin position="223"/>
        <end position="231"/>
    </location>
</feature>
<proteinExistence type="evidence at protein level"/>
<protein>
    <recommendedName>
        <fullName evidence="4">Terpene synthase 3</fullName>
        <ecNumber evidence="3">4.2.3.-</ecNumber>
    </recommendedName>
</protein>
<accession>F0ZPL2</accession>